<comment type="function">
    <text evidence="1">This is one of the proteins that bind and probably mediate the attachment of the 5S RNA into the large ribosomal subunit, where it forms part of the central protuberance.</text>
</comment>
<comment type="subunit">
    <text evidence="1">Part of the 50S ribosomal subunit; part of the 5S rRNA/L5/L18/L25 subcomplex. Contacts the 5S and 23S rRNAs.</text>
</comment>
<comment type="similarity">
    <text evidence="1">Belongs to the universal ribosomal protein uL18 family.</text>
</comment>
<name>RL18_STRPB</name>
<accession>Q1JE43</accession>
<keyword id="KW-0687">Ribonucleoprotein</keyword>
<keyword id="KW-0689">Ribosomal protein</keyword>
<keyword id="KW-0694">RNA-binding</keyword>
<keyword id="KW-0699">rRNA-binding</keyword>
<evidence type="ECO:0000255" key="1">
    <source>
        <dbReference type="HAMAP-Rule" id="MF_01337"/>
    </source>
</evidence>
<evidence type="ECO:0000256" key="2">
    <source>
        <dbReference type="SAM" id="MobiDB-lite"/>
    </source>
</evidence>
<evidence type="ECO:0000305" key="3"/>
<dbReference type="EMBL" id="CP000261">
    <property type="protein sequence ID" value="ABF35115.1"/>
    <property type="molecule type" value="Genomic_DNA"/>
</dbReference>
<dbReference type="SMR" id="Q1JE43"/>
<dbReference type="KEGG" id="spj:MGAS2096_Spy0063"/>
<dbReference type="HOGENOM" id="CLU_098841_0_1_9"/>
<dbReference type="GO" id="GO:0022625">
    <property type="term" value="C:cytosolic large ribosomal subunit"/>
    <property type="evidence" value="ECO:0007669"/>
    <property type="project" value="TreeGrafter"/>
</dbReference>
<dbReference type="GO" id="GO:0008097">
    <property type="term" value="F:5S rRNA binding"/>
    <property type="evidence" value="ECO:0007669"/>
    <property type="project" value="TreeGrafter"/>
</dbReference>
<dbReference type="GO" id="GO:0003735">
    <property type="term" value="F:structural constituent of ribosome"/>
    <property type="evidence" value="ECO:0007669"/>
    <property type="project" value="InterPro"/>
</dbReference>
<dbReference type="GO" id="GO:0006412">
    <property type="term" value="P:translation"/>
    <property type="evidence" value="ECO:0007669"/>
    <property type="project" value="UniProtKB-UniRule"/>
</dbReference>
<dbReference type="CDD" id="cd00432">
    <property type="entry name" value="Ribosomal_L18_L5e"/>
    <property type="match status" value="1"/>
</dbReference>
<dbReference type="FunFam" id="3.30.420.100:FF:000001">
    <property type="entry name" value="50S ribosomal protein L18"/>
    <property type="match status" value="1"/>
</dbReference>
<dbReference type="Gene3D" id="3.30.420.100">
    <property type="match status" value="1"/>
</dbReference>
<dbReference type="HAMAP" id="MF_01337_B">
    <property type="entry name" value="Ribosomal_uL18_B"/>
    <property type="match status" value="1"/>
</dbReference>
<dbReference type="InterPro" id="IPR004389">
    <property type="entry name" value="Ribosomal_uL18_bac-type"/>
</dbReference>
<dbReference type="InterPro" id="IPR005484">
    <property type="entry name" value="Ribosomal_uL18_bac/euk"/>
</dbReference>
<dbReference type="NCBIfam" id="TIGR00060">
    <property type="entry name" value="L18_bact"/>
    <property type="match status" value="1"/>
</dbReference>
<dbReference type="PANTHER" id="PTHR12899">
    <property type="entry name" value="39S RIBOSOMAL PROTEIN L18, MITOCHONDRIAL"/>
    <property type="match status" value="1"/>
</dbReference>
<dbReference type="PANTHER" id="PTHR12899:SF3">
    <property type="entry name" value="LARGE RIBOSOMAL SUBUNIT PROTEIN UL18M"/>
    <property type="match status" value="1"/>
</dbReference>
<dbReference type="Pfam" id="PF00861">
    <property type="entry name" value="Ribosomal_L18p"/>
    <property type="match status" value="1"/>
</dbReference>
<dbReference type="SUPFAM" id="SSF53137">
    <property type="entry name" value="Translational machinery components"/>
    <property type="match status" value="1"/>
</dbReference>
<protein>
    <recommendedName>
        <fullName evidence="1">Large ribosomal subunit protein uL18</fullName>
    </recommendedName>
    <alternativeName>
        <fullName evidence="3">50S ribosomal protein L18</fullName>
    </alternativeName>
</protein>
<sequence>MKIVISKPDKNKIRQKRHRRVRGKLSGTADRPRLNVFRSNTGIYAQVIDDVAGVTLASASTLDKDVSKGTKTEQAVVVGKLVAERAVAKGISEVVFDRGGYLYHGRVKALADAARENGLKF</sequence>
<organism>
    <name type="scientific">Streptococcus pyogenes serotype M12 (strain MGAS2096)</name>
    <dbReference type="NCBI Taxonomy" id="370553"/>
    <lineage>
        <taxon>Bacteria</taxon>
        <taxon>Bacillati</taxon>
        <taxon>Bacillota</taxon>
        <taxon>Bacilli</taxon>
        <taxon>Lactobacillales</taxon>
        <taxon>Streptococcaceae</taxon>
        <taxon>Streptococcus</taxon>
    </lineage>
</organism>
<proteinExistence type="inferred from homology"/>
<feature type="chain" id="PRO_0000251377" description="Large ribosomal subunit protein uL18">
    <location>
        <begin position="1"/>
        <end position="121"/>
    </location>
</feature>
<feature type="region of interest" description="Disordered" evidence="2">
    <location>
        <begin position="1"/>
        <end position="25"/>
    </location>
</feature>
<feature type="compositionally biased region" description="Basic residues" evidence="2">
    <location>
        <begin position="13"/>
        <end position="23"/>
    </location>
</feature>
<reference key="1">
    <citation type="journal article" date="2006" name="Proc. Natl. Acad. Sci. U.S.A.">
        <title>Molecular genetic anatomy of inter- and intraserotype variation in the human bacterial pathogen group A Streptococcus.</title>
        <authorList>
            <person name="Beres S.B."/>
            <person name="Richter E.W."/>
            <person name="Nagiec M.J."/>
            <person name="Sumby P."/>
            <person name="Porcella S.F."/>
            <person name="DeLeo F.R."/>
            <person name="Musser J.M."/>
        </authorList>
    </citation>
    <scope>NUCLEOTIDE SEQUENCE [LARGE SCALE GENOMIC DNA]</scope>
    <source>
        <strain>MGAS2096</strain>
    </source>
</reference>
<gene>
    <name evidence="1" type="primary">rplR</name>
    <name type="ordered locus">MGAS2096_Spy0063</name>
</gene>